<reference key="1">
    <citation type="journal article" date="2009" name="BMC Genomics">
        <title>Complete genome sequence of the sugarcane nitrogen-fixing endophyte Gluconacetobacter diazotrophicus Pal5.</title>
        <authorList>
            <person name="Bertalan M."/>
            <person name="Albano R."/>
            <person name="de Padua V."/>
            <person name="Rouws L."/>
            <person name="Rojas C."/>
            <person name="Hemerly A."/>
            <person name="Teixeira K."/>
            <person name="Schwab S."/>
            <person name="Araujo J."/>
            <person name="Oliveira A."/>
            <person name="Franca L."/>
            <person name="Magalhaes V."/>
            <person name="Alqueres S."/>
            <person name="Cardoso A."/>
            <person name="Almeida W."/>
            <person name="Loureiro M.M."/>
            <person name="Nogueira E."/>
            <person name="Cidade D."/>
            <person name="Oliveira D."/>
            <person name="Simao T."/>
            <person name="Macedo J."/>
            <person name="Valadao A."/>
            <person name="Dreschsel M."/>
            <person name="Freitas F."/>
            <person name="Vidal M."/>
            <person name="Guedes H."/>
            <person name="Rodrigues E."/>
            <person name="Meneses C."/>
            <person name="Brioso P."/>
            <person name="Pozzer L."/>
            <person name="Figueiredo D."/>
            <person name="Montano H."/>
            <person name="Junior J."/>
            <person name="de Souza Filho G."/>
            <person name="Martin Quintana Flores V."/>
            <person name="Ferreira B."/>
            <person name="Branco A."/>
            <person name="Gonzalez P."/>
            <person name="Guillobel H."/>
            <person name="Lemos M."/>
            <person name="Seibel L."/>
            <person name="Macedo J."/>
            <person name="Alves-Ferreira M."/>
            <person name="Sachetto-Martins G."/>
            <person name="Coelho A."/>
            <person name="Santos E."/>
            <person name="Amaral G."/>
            <person name="Neves A."/>
            <person name="Pacheco A.B."/>
            <person name="Carvalho D."/>
            <person name="Lery L."/>
            <person name="Bisch P."/>
            <person name="Rossle S.C."/>
            <person name="Urmenyi T."/>
            <person name="Rael Pereira A."/>
            <person name="Silva R."/>
            <person name="Rondinelli E."/>
            <person name="von Kruger W."/>
            <person name="Martins O."/>
            <person name="Baldani J.I."/>
            <person name="Ferreira P.C."/>
        </authorList>
    </citation>
    <scope>NUCLEOTIDE SEQUENCE [LARGE SCALE GENOMIC DNA]</scope>
    <source>
        <strain>ATCC 49037 / DSM 5601 / CCUG 37298 / CIP 103539 / LMG 7603 / PAl5</strain>
    </source>
</reference>
<reference key="2">
    <citation type="journal article" date="2010" name="Stand. Genomic Sci.">
        <title>Two genome sequences of the same bacterial strain, Gluconacetobacter diazotrophicus PAl 5, suggest a new standard in genome sequence submission.</title>
        <authorList>
            <person name="Giongo A."/>
            <person name="Tyler H.L."/>
            <person name="Zipperer U.N."/>
            <person name="Triplett E.W."/>
        </authorList>
    </citation>
    <scope>NUCLEOTIDE SEQUENCE [LARGE SCALE GENOMIC DNA]</scope>
    <source>
        <strain>ATCC 49037 / DSM 5601 / CCUG 37298 / CIP 103539 / LMG 7603 / PAl5</strain>
    </source>
</reference>
<protein>
    <recommendedName>
        <fullName evidence="1">Large ribosomal subunit protein uL4</fullName>
    </recommendedName>
    <alternativeName>
        <fullName evidence="3">50S ribosomal protein L4</fullName>
    </alternativeName>
</protein>
<accession>A9H3R2</accession>
<accession>B5ZIG4</accession>
<proteinExistence type="inferred from homology"/>
<organism>
    <name type="scientific">Gluconacetobacter diazotrophicus (strain ATCC 49037 / DSM 5601 / CCUG 37298 / CIP 103539 / LMG 7603 / PAl5)</name>
    <dbReference type="NCBI Taxonomy" id="272568"/>
    <lineage>
        <taxon>Bacteria</taxon>
        <taxon>Pseudomonadati</taxon>
        <taxon>Pseudomonadota</taxon>
        <taxon>Alphaproteobacteria</taxon>
        <taxon>Acetobacterales</taxon>
        <taxon>Acetobacteraceae</taxon>
        <taxon>Gluconacetobacter</taxon>
    </lineage>
</organism>
<dbReference type="EMBL" id="AM889285">
    <property type="protein sequence ID" value="CAP57346.1"/>
    <property type="molecule type" value="Genomic_DNA"/>
</dbReference>
<dbReference type="EMBL" id="CP001189">
    <property type="protein sequence ID" value="ACI52697.1"/>
    <property type="molecule type" value="Genomic_DNA"/>
</dbReference>
<dbReference type="RefSeq" id="WP_012227956.1">
    <property type="nucleotide sequence ID" value="NC_010125.1"/>
</dbReference>
<dbReference type="SMR" id="A9H3R2"/>
<dbReference type="STRING" id="272568.GDI3403"/>
<dbReference type="KEGG" id="gdi:GDI3403"/>
<dbReference type="KEGG" id="gdj:Gdia_2967"/>
<dbReference type="eggNOG" id="COG0088">
    <property type="taxonomic scope" value="Bacteria"/>
</dbReference>
<dbReference type="HOGENOM" id="CLU_041575_5_1_5"/>
<dbReference type="OrthoDB" id="9803201at2"/>
<dbReference type="Proteomes" id="UP000001176">
    <property type="component" value="Chromosome"/>
</dbReference>
<dbReference type="GO" id="GO:1990904">
    <property type="term" value="C:ribonucleoprotein complex"/>
    <property type="evidence" value="ECO:0007669"/>
    <property type="project" value="UniProtKB-KW"/>
</dbReference>
<dbReference type="GO" id="GO:0005840">
    <property type="term" value="C:ribosome"/>
    <property type="evidence" value="ECO:0007669"/>
    <property type="project" value="UniProtKB-KW"/>
</dbReference>
<dbReference type="GO" id="GO:0019843">
    <property type="term" value="F:rRNA binding"/>
    <property type="evidence" value="ECO:0007669"/>
    <property type="project" value="UniProtKB-UniRule"/>
</dbReference>
<dbReference type="GO" id="GO:0003735">
    <property type="term" value="F:structural constituent of ribosome"/>
    <property type="evidence" value="ECO:0007669"/>
    <property type="project" value="InterPro"/>
</dbReference>
<dbReference type="GO" id="GO:0006412">
    <property type="term" value="P:translation"/>
    <property type="evidence" value="ECO:0007669"/>
    <property type="project" value="UniProtKB-UniRule"/>
</dbReference>
<dbReference type="Gene3D" id="3.40.1370.10">
    <property type="match status" value="1"/>
</dbReference>
<dbReference type="HAMAP" id="MF_01328_B">
    <property type="entry name" value="Ribosomal_uL4_B"/>
    <property type="match status" value="1"/>
</dbReference>
<dbReference type="InterPro" id="IPR002136">
    <property type="entry name" value="Ribosomal_uL4"/>
</dbReference>
<dbReference type="InterPro" id="IPR013005">
    <property type="entry name" value="Ribosomal_uL4-like"/>
</dbReference>
<dbReference type="InterPro" id="IPR023574">
    <property type="entry name" value="Ribosomal_uL4_dom_sf"/>
</dbReference>
<dbReference type="NCBIfam" id="TIGR03953">
    <property type="entry name" value="rplD_bact"/>
    <property type="match status" value="1"/>
</dbReference>
<dbReference type="PANTHER" id="PTHR10746">
    <property type="entry name" value="50S RIBOSOMAL PROTEIN L4"/>
    <property type="match status" value="1"/>
</dbReference>
<dbReference type="PANTHER" id="PTHR10746:SF6">
    <property type="entry name" value="LARGE RIBOSOMAL SUBUNIT PROTEIN UL4M"/>
    <property type="match status" value="1"/>
</dbReference>
<dbReference type="Pfam" id="PF00573">
    <property type="entry name" value="Ribosomal_L4"/>
    <property type="match status" value="1"/>
</dbReference>
<dbReference type="SUPFAM" id="SSF52166">
    <property type="entry name" value="Ribosomal protein L4"/>
    <property type="match status" value="1"/>
</dbReference>
<feature type="chain" id="PRO_1000086523" description="Large ribosomal subunit protein uL4">
    <location>
        <begin position="1"/>
        <end position="204"/>
    </location>
</feature>
<feature type="region of interest" description="Disordered" evidence="2">
    <location>
        <begin position="49"/>
        <end position="90"/>
    </location>
</feature>
<name>RL4_GLUDA</name>
<sequence length="204" mass="21771">MDYEIKTLDNGSAGTAVLPDEIFGVTPRADIMARVVHWQLAKRRAGTHKVKGMGEVSGTTKKPYRQKGTGSARQGSLRAPQYRTGGAVHGPVVRDHGYDLPKKVRRLGLISALSQKAAEGKLVVLDAATASGRTSELAAKVKALGWKSALIVDATVEENFGRAARNLPKIDALPTIGANVYDILNHDVLAITRAGVEGLKERLA</sequence>
<keyword id="KW-1185">Reference proteome</keyword>
<keyword id="KW-0687">Ribonucleoprotein</keyword>
<keyword id="KW-0689">Ribosomal protein</keyword>
<keyword id="KW-0694">RNA-binding</keyword>
<keyword id="KW-0699">rRNA-binding</keyword>
<gene>
    <name evidence="1" type="primary">rplD</name>
    <name type="ordered locus">GDI3403</name>
    <name type="ordered locus">Gdia_2967</name>
</gene>
<comment type="function">
    <text evidence="1">One of the primary rRNA binding proteins, this protein initially binds near the 5'-end of the 23S rRNA. It is important during the early stages of 50S assembly. It makes multiple contacts with different domains of the 23S rRNA in the assembled 50S subunit and ribosome.</text>
</comment>
<comment type="function">
    <text evidence="1">Forms part of the polypeptide exit tunnel.</text>
</comment>
<comment type="subunit">
    <text evidence="1">Part of the 50S ribosomal subunit.</text>
</comment>
<comment type="similarity">
    <text evidence="1">Belongs to the universal ribosomal protein uL4 family.</text>
</comment>
<evidence type="ECO:0000255" key="1">
    <source>
        <dbReference type="HAMAP-Rule" id="MF_01328"/>
    </source>
</evidence>
<evidence type="ECO:0000256" key="2">
    <source>
        <dbReference type="SAM" id="MobiDB-lite"/>
    </source>
</evidence>
<evidence type="ECO:0000305" key="3"/>